<keyword id="KW-0256">Endoplasmic reticulum</keyword>
<keyword id="KW-0325">Glycoprotein</keyword>
<keyword id="KW-0328">Glycosyltransferase</keyword>
<keyword id="KW-0472">Membrane</keyword>
<keyword id="KW-1185">Reference proteome</keyword>
<keyword id="KW-0808">Transferase</keyword>
<keyword id="KW-0812">Transmembrane</keyword>
<keyword id="KW-1133">Transmembrane helix</keyword>
<protein>
    <recommendedName>
        <fullName evidence="1">Dol-P-Glc:Glc(2)Man(9)GlcNAc(2)-PP-Dol alpha-1,2-glucosyltransferase</fullName>
        <ecNumber evidence="1">2.4.1.256</ecNumber>
    </recommendedName>
    <alternativeName>
        <fullName>Alpha-1,2-glucosyltransferase alg10</fullName>
    </alternativeName>
    <alternativeName>
        <fullName>Alpha-2-glucosyltransferase alg10</fullName>
    </alternativeName>
    <alternativeName>
        <fullName>Asparagine-linked glycosylation protein 10</fullName>
    </alternativeName>
    <alternativeName>
        <fullName>Dolichyl-phosphoglucose-dependent glucosyltransferase alg10</fullName>
    </alternativeName>
</protein>
<comment type="function">
    <text evidence="1">Dol-P-Glc:Glc(2)Man(9)GlcNAc(2)-PP-Dol alpha-1,2-glucosyltransferase that operates in the biosynthetic pathway of dolichol-linked oligosaccharides, the glycan precursors employed in protein asparagine (N)-glycosylation. The assembly of dolichol-linked oligosaccharides begins on the cytosolic side of the endoplasmic reticulum membrane and finishes in its lumen. The sequential addition of sugars to dolichol pyrophosphate produces dolichol-linked oligosaccharides containing fourteen sugars, including two GlcNAcs, nine mannoses and three glucoses. Once assembled, the oligosaccharide is transferred from the lipid to nascent proteins by oligosaccharyltransferases. In the lumen of the endoplasmic reticulum, adds the third and last glucose residue from dolichyl phosphate glucose (Dol-P-Glc) onto the lipid-linked oligosaccharide intermediate Glc(2)Man(9)GlcNAc(2)-PP-Dol to produce Glc(3)Man(9)GlcNAc(2)-PP-Dol.</text>
</comment>
<comment type="catalytic activity">
    <reaction evidence="1">
        <text>an alpha-D-Glc-(1-&gt;3)-alpha-D-Glc-(1-&gt;3)-alpha-D-Man-(1-&gt;2)-alpha-D-Man-(1-&gt;2)-alpha-D-Man-(1-&gt;3)-[alpha-D-Man-(1-&gt;2)-alpha-D-Man-(1-&gt;3)-[alpha-D-Man-(1-&gt;2)-alpha-D-Man-(1-&gt;6)]-alpha-D-Man-(1-&gt;6)]-beta-D-Man-(1-&gt;4)-beta-D-GlcNAc-(1-&gt;4)-alpha-D-GlcNAc-diphospho-di-trans,poly-cis-dolichol + a di-trans,poly-cis-dolichyl beta-D-glucosyl phosphate = a alpha-D-Glc-(1-&gt;2)-alpha-D-Glc-(1-&gt;3)-alpha-D-Glc-(1-&gt;3)-alpha-D-Man-(1-&gt;2)-alpha-D-Man-(1-&gt;2)-alpha-D-Man-(1-&gt;3)-[alpha-D-Man-(1-&gt;2)-alpha-D-Man-(1-&gt;3)-[alpha-D-Man-(1-&gt;2)-alpha-D-Man-(1-&gt;6)]-alpha-D-Man-(1-&gt;6)]-beta-D-Man-(1-&gt;4)-beta-D-GlcNAc-(1-&gt;4)-alpha-D-GlcNAc-diphospho-di-trans,poly-cis-dolichol + a di-trans,poly-cis-dolichyl phosphate + H(+)</text>
        <dbReference type="Rhea" id="RHEA:29543"/>
        <dbReference type="Rhea" id="RHEA-COMP:19498"/>
        <dbReference type="Rhea" id="RHEA-COMP:19502"/>
        <dbReference type="Rhea" id="RHEA-COMP:19512"/>
        <dbReference type="Rhea" id="RHEA-COMP:19522"/>
        <dbReference type="ChEBI" id="CHEBI:15378"/>
        <dbReference type="ChEBI" id="CHEBI:57525"/>
        <dbReference type="ChEBI" id="CHEBI:57683"/>
        <dbReference type="ChEBI" id="CHEBI:132522"/>
        <dbReference type="ChEBI" id="CHEBI:132523"/>
        <dbReference type="EC" id="2.4.1.256"/>
    </reaction>
    <physiologicalReaction direction="left-to-right" evidence="1">
        <dbReference type="Rhea" id="RHEA:29544"/>
    </physiologicalReaction>
</comment>
<comment type="pathway">
    <text evidence="1">Protein modification; protein glycosylation.</text>
</comment>
<comment type="subcellular location">
    <subcellularLocation>
        <location evidence="1">Endoplasmic reticulum membrane</location>
        <topology evidence="2">Multi-pass membrane protein</topology>
    </subcellularLocation>
</comment>
<comment type="similarity">
    <text evidence="4">Belongs to the ALG10 glucosyltransferase family.</text>
</comment>
<organism>
    <name type="scientific">Aspergillus fumigatus (strain ATCC MYA-4609 / CBS 101355 / FGSC A1100 / Af293)</name>
    <name type="common">Neosartorya fumigata</name>
    <dbReference type="NCBI Taxonomy" id="330879"/>
    <lineage>
        <taxon>Eukaryota</taxon>
        <taxon>Fungi</taxon>
        <taxon>Dikarya</taxon>
        <taxon>Ascomycota</taxon>
        <taxon>Pezizomycotina</taxon>
        <taxon>Eurotiomycetes</taxon>
        <taxon>Eurotiomycetidae</taxon>
        <taxon>Eurotiales</taxon>
        <taxon>Aspergillaceae</taxon>
        <taxon>Aspergillus</taxon>
        <taxon>Aspergillus subgen. Fumigati</taxon>
    </lineage>
</organism>
<accession>Q4X162</accession>
<dbReference type="EC" id="2.4.1.256" evidence="1"/>
<dbReference type="EMBL" id="AAHF01000001">
    <property type="protein sequence ID" value="EAL93403.1"/>
    <property type="molecule type" value="Genomic_DNA"/>
</dbReference>
<dbReference type="RefSeq" id="XP_755441.1">
    <property type="nucleotide sequence ID" value="XM_750348.1"/>
</dbReference>
<dbReference type="FunCoup" id="Q4X162">
    <property type="interactions" value="674"/>
</dbReference>
<dbReference type="STRING" id="330879.Q4X162"/>
<dbReference type="GlyCosmos" id="Q4X162">
    <property type="glycosylation" value="1 site, No reported glycans"/>
</dbReference>
<dbReference type="EnsemblFungi" id="EAL93403">
    <property type="protein sequence ID" value="EAL93403"/>
    <property type="gene ID" value="AFUA_2G11080"/>
</dbReference>
<dbReference type="GeneID" id="3513297"/>
<dbReference type="KEGG" id="afm:AFUA_2G11080"/>
<dbReference type="VEuPathDB" id="FungiDB:Afu2g11080"/>
<dbReference type="eggNOG" id="KOG2642">
    <property type="taxonomic scope" value="Eukaryota"/>
</dbReference>
<dbReference type="HOGENOM" id="CLU_017053_0_0_1"/>
<dbReference type="InParanoid" id="Q4X162"/>
<dbReference type="OMA" id="VWDSKIT"/>
<dbReference type="OrthoDB" id="4769at2759"/>
<dbReference type="UniPathway" id="UPA00378"/>
<dbReference type="Proteomes" id="UP000002530">
    <property type="component" value="Chromosome 2"/>
</dbReference>
<dbReference type="GO" id="GO:0005783">
    <property type="term" value="C:endoplasmic reticulum"/>
    <property type="evidence" value="ECO:0000318"/>
    <property type="project" value="GO_Central"/>
</dbReference>
<dbReference type="GO" id="GO:0005789">
    <property type="term" value="C:endoplasmic reticulum membrane"/>
    <property type="evidence" value="ECO:0007669"/>
    <property type="project" value="UniProtKB-SubCell"/>
</dbReference>
<dbReference type="GO" id="GO:0106073">
    <property type="term" value="F:dolichyl pyrophosphate Glc2Man9GlcNAc2 alpha-1,2-glucosyltransferase activity"/>
    <property type="evidence" value="ECO:0000318"/>
    <property type="project" value="GO_Central"/>
</dbReference>
<dbReference type="GO" id="GO:0006488">
    <property type="term" value="P:dolichol-linked oligosaccharide biosynthetic process"/>
    <property type="evidence" value="ECO:0007669"/>
    <property type="project" value="InterPro"/>
</dbReference>
<dbReference type="GO" id="GO:0006487">
    <property type="term" value="P:protein N-linked glycosylation"/>
    <property type="evidence" value="ECO:0000318"/>
    <property type="project" value="GO_Central"/>
</dbReference>
<dbReference type="InterPro" id="IPR016900">
    <property type="entry name" value="Alg10"/>
</dbReference>
<dbReference type="PANTHER" id="PTHR12989">
    <property type="entry name" value="ALPHA-1,2-GLUCOSYLTRANSFERASE ALG10"/>
    <property type="match status" value="1"/>
</dbReference>
<dbReference type="PANTHER" id="PTHR12989:SF10">
    <property type="entry name" value="DOL-P-GLC:GLC(2)MAN(9)GLCNAC(2)-PP-DOL ALPHA-1,2-GLUCOSYLTRANSFERASE-RELATED"/>
    <property type="match status" value="1"/>
</dbReference>
<dbReference type="Pfam" id="PF04922">
    <property type="entry name" value="DIE2_ALG10"/>
    <property type="match status" value="1"/>
</dbReference>
<proteinExistence type="inferred from homology"/>
<name>ALG10_ASPFU</name>
<evidence type="ECO:0000250" key="1">
    <source>
        <dbReference type="UniProtKB" id="P50076"/>
    </source>
</evidence>
<evidence type="ECO:0000255" key="2"/>
<evidence type="ECO:0000256" key="3">
    <source>
        <dbReference type="SAM" id="MobiDB-lite"/>
    </source>
</evidence>
<evidence type="ECO:0000305" key="4"/>
<feature type="chain" id="PRO_0000215451" description="Dol-P-Glc:Glc(2)Man(9)GlcNAc(2)-PP-Dol alpha-1,2-glucosyltransferase">
    <location>
        <begin position="1"/>
        <end position="614"/>
    </location>
</feature>
<feature type="transmembrane region" description="Helical" evidence="2">
    <location>
        <begin position="10"/>
        <end position="30"/>
    </location>
</feature>
<feature type="transmembrane region" description="Helical" evidence="2">
    <location>
        <begin position="65"/>
        <end position="85"/>
    </location>
</feature>
<feature type="transmembrane region" description="Helical" evidence="2">
    <location>
        <begin position="94"/>
        <end position="116"/>
    </location>
</feature>
<feature type="transmembrane region" description="Helical" evidence="2">
    <location>
        <begin position="131"/>
        <end position="153"/>
    </location>
</feature>
<feature type="transmembrane region" description="Helical" evidence="2">
    <location>
        <begin position="176"/>
        <end position="196"/>
    </location>
</feature>
<feature type="transmembrane region" description="Helical" evidence="2">
    <location>
        <begin position="200"/>
        <end position="217"/>
    </location>
</feature>
<feature type="transmembrane region" description="Helical" evidence="2">
    <location>
        <begin position="272"/>
        <end position="292"/>
    </location>
</feature>
<feature type="transmembrane region" description="Helical" evidence="2">
    <location>
        <begin position="313"/>
        <end position="333"/>
    </location>
</feature>
<feature type="transmembrane region" description="Helical" evidence="2">
    <location>
        <begin position="360"/>
        <end position="380"/>
    </location>
</feature>
<feature type="transmembrane region" description="Helical" evidence="2">
    <location>
        <begin position="407"/>
        <end position="427"/>
    </location>
</feature>
<feature type="transmembrane region" description="Helical" evidence="2">
    <location>
        <begin position="510"/>
        <end position="530"/>
    </location>
</feature>
<feature type="transmembrane region" description="Helical" evidence="2">
    <location>
        <begin position="577"/>
        <end position="597"/>
    </location>
</feature>
<feature type="region of interest" description="Disordered" evidence="3">
    <location>
        <begin position="450"/>
        <end position="483"/>
    </location>
</feature>
<feature type="compositionally biased region" description="Basic and acidic residues" evidence="3">
    <location>
        <begin position="452"/>
        <end position="466"/>
    </location>
</feature>
<feature type="compositionally biased region" description="Polar residues" evidence="3">
    <location>
        <begin position="474"/>
        <end position="483"/>
    </location>
</feature>
<feature type="glycosylation site" description="N-linked (GlcNAc...) asparagine" evidence="2">
    <location>
        <position position="574"/>
    </location>
</feature>
<sequence>MSAVRPVSGISLAARYAVPFVLLLIPLWMAKVNTVVPDPYLDEVFHVPQAQAYWDHRWFHWDPKITTPPGLYIWSYILCAAALVLRGSPKELNAGALRATNVAAAAVFLPWRLQTLLDALRKVRNTRPSGAWLSHTVLNICLFPPLFFFSGLYYTDIVSLLAVIEAYNWDIKRSAGSWSLLKTAVFVATGLTALVLRQTNIFWVAIFLGGLQVVRRLRQSSKASQASSLLQIIQSGFNNELYDPLVSEASFFDYVKTSISLVSVGLRNFIPIIISTVPYLVILAAFGGFVLWNDGVVLGHKEFHTAGLHLSQMLYIWPYFMFFSWPILIFPVINLVLPNSVIPAFFDYGFTKKQKGLPRIWTALVIIPIMLAVVHFNTIIHPFTLADNRHYIFYVFRILRSHPAIRYAAVPTAYFVGGWAVISAFGFSTTKPQPQFVPITKSNELAAAQKGQLKEAARKKEKSERKSKSKKASQVTASPPAQDQFSPEVLARIQEHLAQRQKQQQEVPRASFVLVWLAATALSLVTAPLVEPRYFIIPWVMWRLHLPPQPVPLVYRQQRPRDEREALHADLATNFSLFMETYWFLAINAATGYIFLYKGFEWPQEPGKVQRFMW</sequence>
<gene>
    <name type="primary">alg10</name>
    <name type="ORF">AFUA_2G11080</name>
</gene>
<reference key="1">
    <citation type="journal article" date="2005" name="Nature">
        <title>Genomic sequence of the pathogenic and allergenic filamentous fungus Aspergillus fumigatus.</title>
        <authorList>
            <person name="Nierman W.C."/>
            <person name="Pain A."/>
            <person name="Anderson M.J."/>
            <person name="Wortman J.R."/>
            <person name="Kim H.S."/>
            <person name="Arroyo J."/>
            <person name="Berriman M."/>
            <person name="Abe K."/>
            <person name="Archer D.B."/>
            <person name="Bermejo C."/>
            <person name="Bennett J.W."/>
            <person name="Bowyer P."/>
            <person name="Chen D."/>
            <person name="Collins M."/>
            <person name="Coulsen R."/>
            <person name="Davies R."/>
            <person name="Dyer P.S."/>
            <person name="Farman M.L."/>
            <person name="Fedorova N."/>
            <person name="Fedorova N.D."/>
            <person name="Feldblyum T.V."/>
            <person name="Fischer R."/>
            <person name="Fosker N."/>
            <person name="Fraser A."/>
            <person name="Garcia J.L."/>
            <person name="Garcia M.J."/>
            <person name="Goble A."/>
            <person name="Goldman G.H."/>
            <person name="Gomi K."/>
            <person name="Griffith-Jones S."/>
            <person name="Gwilliam R."/>
            <person name="Haas B.J."/>
            <person name="Haas H."/>
            <person name="Harris D.E."/>
            <person name="Horiuchi H."/>
            <person name="Huang J."/>
            <person name="Humphray S."/>
            <person name="Jimenez J."/>
            <person name="Keller N."/>
            <person name="Khouri H."/>
            <person name="Kitamoto K."/>
            <person name="Kobayashi T."/>
            <person name="Konzack S."/>
            <person name="Kulkarni R."/>
            <person name="Kumagai T."/>
            <person name="Lafton A."/>
            <person name="Latge J.-P."/>
            <person name="Li W."/>
            <person name="Lord A."/>
            <person name="Lu C."/>
            <person name="Majoros W.H."/>
            <person name="May G.S."/>
            <person name="Miller B.L."/>
            <person name="Mohamoud Y."/>
            <person name="Molina M."/>
            <person name="Monod M."/>
            <person name="Mouyna I."/>
            <person name="Mulligan S."/>
            <person name="Murphy L.D."/>
            <person name="O'Neil S."/>
            <person name="Paulsen I."/>
            <person name="Penalva M.A."/>
            <person name="Pertea M."/>
            <person name="Price C."/>
            <person name="Pritchard B.L."/>
            <person name="Quail M.A."/>
            <person name="Rabbinowitsch E."/>
            <person name="Rawlins N."/>
            <person name="Rajandream M.A."/>
            <person name="Reichard U."/>
            <person name="Renauld H."/>
            <person name="Robson G.D."/>
            <person name="Rodriguez de Cordoba S."/>
            <person name="Rodriguez-Pena J.M."/>
            <person name="Ronning C.M."/>
            <person name="Rutter S."/>
            <person name="Salzberg S.L."/>
            <person name="Sanchez M."/>
            <person name="Sanchez-Ferrero J.C."/>
            <person name="Saunders D."/>
            <person name="Seeger K."/>
            <person name="Squares R."/>
            <person name="Squares S."/>
            <person name="Takeuchi M."/>
            <person name="Tekaia F."/>
            <person name="Turner G."/>
            <person name="Vazquez de Aldana C.R."/>
            <person name="Weidman J."/>
            <person name="White O."/>
            <person name="Woodward J.R."/>
            <person name="Yu J.-H."/>
            <person name="Fraser C.M."/>
            <person name="Galagan J.E."/>
            <person name="Asai K."/>
            <person name="Machida M."/>
            <person name="Hall N."/>
            <person name="Barrell B.G."/>
            <person name="Denning D.W."/>
        </authorList>
    </citation>
    <scope>NUCLEOTIDE SEQUENCE [LARGE SCALE GENOMIC DNA]</scope>
    <source>
        <strain>ATCC MYA-4609 / CBS 101355 / FGSC A1100 / Af293</strain>
    </source>
</reference>